<name>C81Q2_SESRA</name>
<accession>Q33DX9</accession>
<organism>
    <name type="scientific">Sesamum radiatum</name>
    <name type="common">Black benniseed</name>
    <dbReference type="NCBI Taxonomy" id="300843"/>
    <lineage>
        <taxon>Eukaryota</taxon>
        <taxon>Viridiplantae</taxon>
        <taxon>Streptophyta</taxon>
        <taxon>Embryophyta</taxon>
        <taxon>Tracheophyta</taxon>
        <taxon>Spermatophyta</taxon>
        <taxon>Magnoliopsida</taxon>
        <taxon>eudicotyledons</taxon>
        <taxon>Gunneridae</taxon>
        <taxon>Pentapetalae</taxon>
        <taxon>asterids</taxon>
        <taxon>lamiids</taxon>
        <taxon>Lamiales</taxon>
        <taxon>Pedaliaceae</taxon>
        <taxon>Sesamum</taxon>
    </lineage>
</organism>
<feature type="chain" id="PRO_0000455168" description="(+)-piperitol/(+)-sesamin synthase CYP81Q2">
    <location>
        <begin position="1"/>
        <end position="506"/>
    </location>
</feature>
<feature type="transmembrane region" description="Helical" evidence="2">
    <location>
        <begin position="3"/>
        <end position="23"/>
    </location>
</feature>
<feature type="binding site" description="axial binding residue" evidence="1">
    <location>
        <position position="439"/>
    </location>
    <ligand>
        <name>heme</name>
        <dbReference type="ChEBI" id="CHEBI:30413"/>
    </ligand>
    <ligandPart>
        <name>Fe</name>
        <dbReference type="ChEBI" id="CHEBI:18248"/>
    </ligandPart>
</feature>
<protein>
    <recommendedName>
        <fullName evidence="5">(+)-piperitol/(+)-sesamin synthase CYP81Q2</fullName>
        <ecNumber evidence="3">1.14.19.74</ecNumber>
    </recommendedName>
    <alternativeName>
        <fullName evidence="4">Cytochrome P450 81Q2</fullName>
    </alternativeName>
    <alternativeName>
        <fullName evidence="5">Piperitol synthase CYP81Q2</fullName>
    </alternativeName>
    <alternativeName>
        <fullName evidence="5">Sesamin synthase CYP81Q2</fullName>
    </alternativeName>
</protein>
<proteinExistence type="evidence at protein level"/>
<evidence type="ECO:0000250" key="1">
    <source>
        <dbReference type="UniProtKB" id="Q96242"/>
    </source>
</evidence>
<evidence type="ECO:0000255" key="2"/>
<evidence type="ECO:0000269" key="3">
    <source>
    </source>
</evidence>
<evidence type="ECO:0000303" key="4">
    <source>
    </source>
</evidence>
<evidence type="ECO:0000305" key="5"/>
<reference key="1">
    <citation type="journal article" date="2006" name="Proc. Natl. Acad. Sci. U.S.A.">
        <title>Formation of two methylenedioxy bridges by a Sesamum CYP81Q protein yielding a furofuran lignan, (+)-sesamin.</title>
        <authorList>
            <person name="Ono E."/>
            <person name="Nakai M."/>
            <person name="Fukui Y."/>
            <person name="Tomimori N."/>
            <person name="Fukuchi-Mizutani M."/>
            <person name="Saito M."/>
            <person name="Satake H."/>
            <person name="Tanaka T."/>
            <person name="Katsuta M."/>
            <person name="Umezawa T."/>
            <person name="Tanaka Y."/>
        </authorList>
    </citation>
    <scope>NUCLEOTIDE SEQUENCE [MRNA]</scope>
    <scope>FUNCTION</scope>
    <scope>CATALYTIC ACTIVITY</scope>
    <scope>TISSUE SPECIFICITY</scope>
</reference>
<sequence length="506" mass="57394">MEAEMLYSALALTFAIFMVYRILSNSQEKSSLIKLPPSPPGWLPVIGHVHLMKNLLHRTLYDFSQKLGPIFSLRFGTRLVVVVSSSSLVEECFTKYDIVLANRPQPSVDRRSLGFSTTSVIGAPYGDHWRNLRKLCDLEVFAPTRLASFLSIRLDERDRMISSLYKISSAGFAKVNLETKIVELTFNNIMRMVAGKRYYGEEAEDDEEAKRFRDLTKEALELTSASNPGEIFPILRWLGFNGLEKKLAVHARKTDEFMQGLLDEHRRGERQNTMVDHLLSLQESQPEYYTDEIITGLIVALIIAGTDASVVTTEWAMSLILNHPQVLEKARKELDTLVGHERMVDEHDLPKLRYLHCIVLETLRLFPSVPTLVPHEPSEDCKIGGYNVPKGTMILVNAWAIHRDPKVWDDPLSFKPDRFETMEVETHKLLPFGMGRRACPGAGLAQKFVGLALGSLIQCFEWERMSAEKIDLNEGSGITLPKAKTLEAMCKPRHIMERVLRQVSNV</sequence>
<comment type="function">
    <text evidence="3">Involved in the biosynthesis of (+)-sesamin, a furofuran class lignan (PubMed:16785429). Functions in a dual catalytic mode (PubMed:16785429). Catalyzes the synthesis of (+)-sesamin from (+)- pinoresinol by formation of two successive methylenedioxy bridges on (+)-pinoresinol and (+)-piperitol, respectively (PubMed:16785429).</text>
</comment>
<comment type="catalytic activity">
    <reaction evidence="3">
        <text>(+)-piperitol + reduced [NADPH--hemoprotein reductase] + O2 = (+)-sesamin + oxidized [NADPH--hemoprotein reductase] + 2 H2O + H(+)</text>
        <dbReference type="Rhea" id="RHEA:56780"/>
        <dbReference type="Rhea" id="RHEA-COMP:11964"/>
        <dbReference type="Rhea" id="RHEA-COMP:11965"/>
        <dbReference type="ChEBI" id="CHEBI:15377"/>
        <dbReference type="ChEBI" id="CHEBI:15378"/>
        <dbReference type="ChEBI" id="CHEBI:15379"/>
        <dbReference type="ChEBI" id="CHEBI:57618"/>
        <dbReference type="ChEBI" id="CHEBI:58210"/>
        <dbReference type="ChEBI" id="CHEBI:66470"/>
        <dbReference type="ChEBI" id="CHEBI:141003"/>
        <dbReference type="EC" id="1.14.19.74"/>
    </reaction>
    <physiologicalReaction direction="left-to-right" evidence="3">
        <dbReference type="Rhea" id="RHEA:56781"/>
    </physiologicalReaction>
</comment>
<comment type="catalytic activity">
    <reaction evidence="3">
        <text>(+)-pinoresinol + reduced [NADPH--hemoprotein reductase] + O2 = (+)-piperitol + oxidized [NADPH--hemoprotein reductase] + 2 H2O + H(+)</text>
        <dbReference type="Rhea" id="RHEA:56776"/>
        <dbReference type="Rhea" id="RHEA-COMP:11964"/>
        <dbReference type="Rhea" id="RHEA-COMP:11965"/>
        <dbReference type="ChEBI" id="CHEBI:40"/>
        <dbReference type="ChEBI" id="CHEBI:15377"/>
        <dbReference type="ChEBI" id="CHEBI:15378"/>
        <dbReference type="ChEBI" id="CHEBI:15379"/>
        <dbReference type="ChEBI" id="CHEBI:57618"/>
        <dbReference type="ChEBI" id="CHEBI:58210"/>
        <dbReference type="ChEBI" id="CHEBI:141003"/>
        <dbReference type="EC" id="1.14.19.74"/>
    </reaction>
    <physiologicalReaction direction="left-to-right" evidence="3">
        <dbReference type="Rhea" id="RHEA:56777"/>
    </physiologicalReaction>
</comment>
<comment type="cofactor">
    <cofactor evidence="1">
        <name>heme</name>
        <dbReference type="ChEBI" id="CHEBI:30413"/>
    </cofactor>
</comment>
<comment type="subcellular location">
    <subcellularLocation>
        <location evidence="2">Membrane</location>
        <topology evidence="2">Single-pass membrane protein</topology>
    </subcellularLocation>
</comment>
<comment type="tissue specificity">
    <text evidence="3">Expressed in seeds.</text>
</comment>
<comment type="similarity">
    <text evidence="5">Belongs to the cytochrome P450 family.</text>
</comment>
<keyword id="KW-0349">Heme</keyword>
<keyword id="KW-0408">Iron</keyword>
<keyword id="KW-0472">Membrane</keyword>
<keyword id="KW-0479">Metal-binding</keyword>
<keyword id="KW-0503">Monooxygenase</keyword>
<keyword id="KW-0560">Oxidoreductase</keyword>
<keyword id="KW-0812">Transmembrane</keyword>
<keyword id="KW-1133">Transmembrane helix</keyword>
<dbReference type="EC" id="1.14.19.74" evidence="3"/>
<dbReference type="EMBL" id="AB194715">
    <property type="protein sequence ID" value="BAE48235.1"/>
    <property type="molecule type" value="mRNA"/>
</dbReference>
<dbReference type="SMR" id="Q33DX9"/>
<dbReference type="KEGG" id="ag:BAE48235"/>
<dbReference type="BRENDA" id="1.14.19.74">
    <property type="organism ID" value="15770"/>
</dbReference>
<dbReference type="GO" id="GO:0016020">
    <property type="term" value="C:membrane"/>
    <property type="evidence" value="ECO:0007669"/>
    <property type="project" value="UniProtKB-SubCell"/>
</dbReference>
<dbReference type="GO" id="GO:0020037">
    <property type="term" value="F:heme binding"/>
    <property type="evidence" value="ECO:0007669"/>
    <property type="project" value="InterPro"/>
</dbReference>
<dbReference type="GO" id="GO:0005506">
    <property type="term" value="F:iron ion binding"/>
    <property type="evidence" value="ECO:0007669"/>
    <property type="project" value="InterPro"/>
</dbReference>
<dbReference type="GO" id="GO:0004497">
    <property type="term" value="F:monooxygenase activity"/>
    <property type="evidence" value="ECO:0007669"/>
    <property type="project" value="UniProtKB-KW"/>
</dbReference>
<dbReference type="GO" id="GO:0016705">
    <property type="term" value="F:oxidoreductase activity, acting on paired donors, with incorporation or reduction of molecular oxygen"/>
    <property type="evidence" value="ECO:0007669"/>
    <property type="project" value="InterPro"/>
</dbReference>
<dbReference type="CDD" id="cd20653">
    <property type="entry name" value="CYP81"/>
    <property type="match status" value="1"/>
</dbReference>
<dbReference type="FunFam" id="1.10.630.10:FF:000023">
    <property type="entry name" value="Cytochrome P450 family protein"/>
    <property type="match status" value="1"/>
</dbReference>
<dbReference type="Gene3D" id="1.10.630.10">
    <property type="entry name" value="Cytochrome P450"/>
    <property type="match status" value="1"/>
</dbReference>
<dbReference type="InterPro" id="IPR001128">
    <property type="entry name" value="Cyt_P450"/>
</dbReference>
<dbReference type="InterPro" id="IPR017972">
    <property type="entry name" value="Cyt_P450_CS"/>
</dbReference>
<dbReference type="InterPro" id="IPR002401">
    <property type="entry name" value="Cyt_P450_E_grp-I"/>
</dbReference>
<dbReference type="InterPro" id="IPR036396">
    <property type="entry name" value="Cyt_P450_sf"/>
</dbReference>
<dbReference type="InterPro" id="IPR050651">
    <property type="entry name" value="Plant_Cytochrome_P450_Monoox"/>
</dbReference>
<dbReference type="PANTHER" id="PTHR47947">
    <property type="entry name" value="CYTOCHROME P450 82C3-RELATED"/>
    <property type="match status" value="1"/>
</dbReference>
<dbReference type="PANTHER" id="PTHR47947:SF62">
    <property type="entry name" value="CYTOCHROME P450, FAMILY 81, SUBFAMILY D, POLYPEPTIDE 5"/>
    <property type="match status" value="1"/>
</dbReference>
<dbReference type="Pfam" id="PF00067">
    <property type="entry name" value="p450"/>
    <property type="match status" value="1"/>
</dbReference>
<dbReference type="PRINTS" id="PR00463">
    <property type="entry name" value="EP450I"/>
</dbReference>
<dbReference type="PRINTS" id="PR00385">
    <property type="entry name" value="P450"/>
</dbReference>
<dbReference type="SUPFAM" id="SSF48264">
    <property type="entry name" value="Cytochrome P450"/>
    <property type="match status" value="1"/>
</dbReference>
<dbReference type="PROSITE" id="PS00086">
    <property type="entry name" value="CYTOCHROME_P450"/>
    <property type="match status" value="1"/>
</dbReference>
<gene>
    <name evidence="4" type="primary">CYP81Q2</name>
</gene>